<accession>P04152</accession>
<feature type="chain" id="PRO_0000173982" description="Protein UmuC">
    <location>
        <begin position="1"/>
        <end position="422"/>
    </location>
</feature>
<feature type="domain" description="UmuC" evidence="1">
    <location>
        <begin position="2"/>
        <end position="188"/>
    </location>
</feature>
<feature type="mutagenesis site" description="In umuC36; non-mutable." evidence="4">
    <original>E</original>
    <variation>K</variation>
    <location>
        <position position="75"/>
    </location>
</feature>
<feature type="mutagenesis site" description="In umuC104; non-mutable." evidence="4">
    <original>D</original>
    <variation>N</variation>
    <location>
        <position position="101"/>
    </location>
</feature>
<feature type="mutagenesis site" description="In umuC25; non-mutable." evidence="4">
    <original>T</original>
    <variation>K</variation>
    <location>
        <position position="290"/>
    </location>
</feature>
<feature type="sequence conflict" description="In Ref. 1; AAA24729." evidence="6" ref="1">
    <original>A</original>
    <variation>E</variation>
    <location>
        <position position="152"/>
    </location>
</feature>
<protein>
    <recommendedName>
        <fullName>Protein UmuC</fullName>
    </recommendedName>
    <alternativeName>
        <fullName>DNA polymerase V</fullName>
        <shortName>Pol V</shortName>
    </alternativeName>
</protein>
<comment type="function">
    <text evidence="3">Involved in UV protection and mutation. Poorly processive, error-prone DNA polymerase involved in translesion repair (PubMed:10801133). Essential for induced (or SOS) mutagenesis. Able to replicate DNA across DNA lesions (thymine photodimers and abasic sites, translesion synthesis) in the presence of activated RecA; efficiency is maximal in the presence of the beta sliding-clamp and clamp-loading complex of DNA polymerase III plus single-stranded binding protein (SSB) (PubMed:10801133). RecA and to a lesser extent the beta clamp-complex may target Pol V to replication complexes stalled at DNA template lesions (PubMed:10801133).</text>
</comment>
<comment type="interaction">
    <interactant intactId="EBI-1119849">
        <id>P04152</id>
    </interactant>
    <interactant intactId="EBI-25426537">
        <id>PRO_0000027305</id>
        <label>umuD</label>
        <dbReference type="UniProtKB" id="P0AG11"/>
    </interactant>
    <organismsDiffer>false</organismsDiffer>
    <experiments>7</experiments>
</comment>
<comment type="induction">
    <text evidence="2 5">Repressed by LexA, induced by DNA damage (PubMed:10760155). Induced 1.5-fold by hydroxyurea (PubMed:20005847).</text>
</comment>
<comment type="similarity">
    <text evidence="6">Belongs to the DNA polymerase type-Y family.</text>
</comment>
<keyword id="KW-0227">DNA damage</keyword>
<keyword id="KW-0234">DNA repair</keyword>
<keyword id="KW-1185">Reference proteome</keyword>
<keyword id="KW-0741">SOS mutagenesis</keyword>
<keyword id="KW-0742">SOS response</keyword>
<proteinExistence type="evidence at protein level"/>
<sequence>MFALCDVNAFYASCETVFRPDLWGKPVVVLSNNDGCVIARNAEAKALGVKMGDPWFKQKDLFRRCGVVCFSSNYELYADMSNRVMSTLEELSPRVEIYSIDEAFCDLTGVRNCRDLTDFGREIRATVLQRTHLTVGVGIAQTKTLAKLANHAAKKWQRQTGGVVDLSNLERQRKLMSALPVDDVWGIGRRISKKLDAMGIKTVLDLADTDIRFIRKHFNVVLERTVRELRGEPCLQLEEFAPTKQEIICSRSFGERITDYPSMRQAICSYAARAAEKLRSEHQYCRFISTFIKTSPFALNEPYYGNSASVKLLTPTQDSRDIINAATRSLDAIWQAGHRYQKAGVMLGDFFSQGVAQLNLFDDNAPRPGSEQLMTVMDTLNAKEGRGTLYFAGQGIQQQWQMKRAMLSPRYTTRSSDLLRVK</sequence>
<gene>
    <name type="primary">umuC</name>
    <name type="ordered locus">b1184</name>
    <name type="ordered locus">JW1173</name>
</gene>
<dbReference type="EMBL" id="M10107">
    <property type="protein sequence ID" value="AAA24729.1"/>
    <property type="molecule type" value="Genomic_DNA"/>
</dbReference>
<dbReference type="EMBL" id="M13387">
    <property type="protein sequence ID" value="AAA98074.1"/>
    <property type="molecule type" value="Genomic_DNA"/>
</dbReference>
<dbReference type="EMBL" id="U00096">
    <property type="protein sequence ID" value="AAC74268.1"/>
    <property type="molecule type" value="Genomic_DNA"/>
</dbReference>
<dbReference type="EMBL" id="AP009048">
    <property type="protein sequence ID" value="BAA36031.1"/>
    <property type="molecule type" value="Genomic_DNA"/>
</dbReference>
<dbReference type="PIR" id="E64864">
    <property type="entry name" value="ZWECC"/>
</dbReference>
<dbReference type="RefSeq" id="NP_415702.1">
    <property type="nucleotide sequence ID" value="NC_000913.3"/>
</dbReference>
<dbReference type="RefSeq" id="WP_000457616.1">
    <property type="nucleotide sequence ID" value="NZ_STEB01000023.1"/>
</dbReference>
<dbReference type="SMR" id="P04152"/>
<dbReference type="BioGRID" id="4261816">
    <property type="interactions" value="149"/>
</dbReference>
<dbReference type="ComplexPortal" id="CPX-5544">
    <property type="entry name" value="DNA polymerase V mutasome complex"/>
</dbReference>
<dbReference type="DIP" id="DIP-11090N"/>
<dbReference type="FunCoup" id="P04152">
    <property type="interactions" value="260"/>
</dbReference>
<dbReference type="IntAct" id="P04152">
    <property type="interactions" value="11"/>
</dbReference>
<dbReference type="STRING" id="511145.b1184"/>
<dbReference type="PaxDb" id="511145-b1184"/>
<dbReference type="EnsemblBacteria" id="AAC74268">
    <property type="protein sequence ID" value="AAC74268"/>
    <property type="gene ID" value="b1184"/>
</dbReference>
<dbReference type="GeneID" id="946359"/>
<dbReference type="KEGG" id="ecj:JW1173"/>
<dbReference type="KEGG" id="eco:b1184"/>
<dbReference type="KEGG" id="ecoc:C3026_06975"/>
<dbReference type="PATRIC" id="fig|1411691.4.peg.1103"/>
<dbReference type="EchoBASE" id="EB1049"/>
<dbReference type="eggNOG" id="COG0389">
    <property type="taxonomic scope" value="Bacteria"/>
</dbReference>
<dbReference type="HOGENOM" id="CLU_012348_3_0_6"/>
<dbReference type="InParanoid" id="P04152"/>
<dbReference type="OMA" id="PHMNLYI"/>
<dbReference type="OrthoDB" id="9808813at2"/>
<dbReference type="PhylomeDB" id="P04152"/>
<dbReference type="BioCyc" id="EcoCyc:EG11056-MONOMER"/>
<dbReference type="BioCyc" id="MetaCyc:EG11056-MONOMER"/>
<dbReference type="PRO" id="PR:P04152"/>
<dbReference type="Proteomes" id="UP000000625">
    <property type="component" value="Chromosome"/>
</dbReference>
<dbReference type="GO" id="GO:0005829">
    <property type="term" value="C:cytosol"/>
    <property type="evidence" value="ECO:0000305"/>
    <property type="project" value="EcoCyc"/>
</dbReference>
<dbReference type="GO" id="GO:0009355">
    <property type="term" value="C:DNA polymerase V complex"/>
    <property type="evidence" value="ECO:0000314"/>
    <property type="project" value="EcoCyc"/>
</dbReference>
<dbReference type="GO" id="GO:0016020">
    <property type="term" value="C:membrane"/>
    <property type="evidence" value="ECO:0000314"/>
    <property type="project" value="EcoCyc"/>
</dbReference>
<dbReference type="GO" id="GO:0005886">
    <property type="term" value="C:plasma membrane"/>
    <property type="evidence" value="ECO:0000314"/>
    <property type="project" value="EcoCyc"/>
</dbReference>
<dbReference type="GO" id="GO:0008094">
    <property type="term" value="F:ATP-dependent activity, acting on DNA"/>
    <property type="evidence" value="ECO:0000314"/>
    <property type="project" value="EcoCyc"/>
</dbReference>
<dbReference type="GO" id="GO:0003684">
    <property type="term" value="F:damaged DNA binding"/>
    <property type="evidence" value="ECO:0007669"/>
    <property type="project" value="InterPro"/>
</dbReference>
<dbReference type="GO" id="GO:0003887">
    <property type="term" value="F:DNA-directed DNA polymerase activity"/>
    <property type="evidence" value="ECO:0000314"/>
    <property type="project" value="EcoCyc"/>
</dbReference>
<dbReference type="GO" id="GO:0003697">
    <property type="term" value="F:single-stranded DNA binding"/>
    <property type="evidence" value="ECO:0000314"/>
    <property type="project" value="EcoCyc"/>
</dbReference>
<dbReference type="GO" id="GO:0006974">
    <property type="term" value="P:DNA damage response"/>
    <property type="evidence" value="ECO:0000270"/>
    <property type="project" value="EcoCyc"/>
</dbReference>
<dbReference type="GO" id="GO:0042276">
    <property type="term" value="P:error-prone translesion synthesis"/>
    <property type="evidence" value="ECO:0000318"/>
    <property type="project" value="GO_Central"/>
</dbReference>
<dbReference type="GO" id="GO:0009432">
    <property type="term" value="P:SOS response"/>
    <property type="evidence" value="ECO:0000314"/>
    <property type="project" value="ComplexPortal"/>
</dbReference>
<dbReference type="GO" id="GO:0019985">
    <property type="term" value="P:translesion synthesis"/>
    <property type="evidence" value="ECO:0000314"/>
    <property type="project" value="EcoCyc"/>
</dbReference>
<dbReference type="CDD" id="cd01700">
    <property type="entry name" value="PolY_Pol_V_umuC"/>
    <property type="match status" value="1"/>
</dbReference>
<dbReference type="FunFam" id="1.10.150.20:FF:000045">
    <property type="entry name" value="DNA polymerase V subunit"/>
    <property type="match status" value="1"/>
</dbReference>
<dbReference type="FunFam" id="3.30.70.270:FF:000012">
    <property type="entry name" value="DNA polymerase V subunit"/>
    <property type="match status" value="1"/>
</dbReference>
<dbReference type="FunFam" id="3.40.1170.60:FF:000010">
    <property type="entry name" value="DNA polymerase V subunit"/>
    <property type="match status" value="1"/>
</dbReference>
<dbReference type="Gene3D" id="3.30.70.270">
    <property type="match status" value="1"/>
</dbReference>
<dbReference type="Gene3D" id="3.40.1170.60">
    <property type="match status" value="1"/>
</dbReference>
<dbReference type="Gene3D" id="1.10.150.20">
    <property type="entry name" value="5' to 3' exonuclease, C-terminal subdomain"/>
    <property type="match status" value="1"/>
</dbReference>
<dbReference type="Gene3D" id="3.30.1490.100">
    <property type="entry name" value="DNA polymerase, Y-family, little finger domain"/>
    <property type="match status" value="1"/>
</dbReference>
<dbReference type="InterPro" id="IPR043502">
    <property type="entry name" value="DNA/RNA_pol_sf"/>
</dbReference>
<dbReference type="InterPro" id="IPR036775">
    <property type="entry name" value="DNA_pol_Y-fam_lit_finger_sf"/>
</dbReference>
<dbReference type="InterPro" id="IPR017961">
    <property type="entry name" value="DNA_pol_Y-fam_little_finger"/>
</dbReference>
<dbReference type="InterPro" id="IPR050116">
    <property type="entry name" value="DNA_polymerase-Y"/>
</dbReference>
<dbReference type="InterPro" id="IPR025188">
    <property type="entry name" value="DUF4113"/>
</dbReference>
<dbReference type="InterPro" id="IPR024728">
    <property type="entry name" value="PolY_HhH_motif"/>
</dbReference>
<dbReference type="InterPro" id="IPR043128">
    <property type="entry name" value="Rev_trsase/Diguanyl_cyclase"/>
</dbReference>
<dbReference type="InterPro" id="IPR001126">
    <property type="entry name" value="UmuC"/>
</dbReference>
<dbReference type="NCBIfam" id="NF002955">
    <property type="entry name" value="PRK03609.1"/>
    <property type="match status" value="1"/>
</dbReference>
<dbReference type="PANTHER" id="PTHR11076">
    <property type="entry name" value="DNA REPAIR POLYMERASE UMUC / TRANSFERASE FAMILY MEMBER"/>
    <property type="match status" value="1"/>
</dbReference>
<dbReference type="PANTHER" id="PTHR11076:SF34">
    <property type="entry name" value="PROTEIN UMUC"/>
    <property type="match status" value="1"/>
</dbReference>
<dbReference type="Pfam" id="PF13438">
    <property type="entry name" value="DUF4113"/>
    <property type="match status" value="1"/>
</dbReference>
<dbReference type="Pfam" id="PF00817">
    <property type="entry name" value="IMS"/>
    <property type="match status" value="1"/>
</dbReference>
<dbReference type="Pfam" id="PF11799">
    <property type="entry name" value="IMS_C"/>
    <property type="match status" value="1"/>
</dbReference>
<dbReference type="Pfam" id="PF11798">
    <property type="entry name" value="IMS_HHH"/>
    <property type="match status" value="1"/>
</dbReference>
<dbReference type="SUPFAM" id="SSF56672">
    <property type="entry name" value="DNA/RNA polymerases"/>
    <property type="match status" value="1"/>
</dbReference>
<dbReference type="SUPFAM" id="SSF100879">
    <property type="entry name" value="Lesion bypass DNA polymerase (Y-family), little finger domain"/>
    <property type="match status" value="1"/>
</dbReference>
<dbReference type="PROSITE" id="PS50173">
    <property type="entry name" value="UMUC"/>
    <property type="match status" value="1"/>
</dbReference>
<name>UMUC_ECOLI</name>
<reference key="1">
    <citation type="journal article" date="1985" name="Proc. Natl. Acad. Sci. U.S.A.">
        <title>Structural analysis of the umu operon required for inducible mutagenesis in Escherichia coli.</title>
        <authorList>
            <person name="Kitagawa Y."/>
            <person name="Akaboshi E."/>
            <person name="Shinagawa H."/>
            <person name="Horii T."/>
            <person name="Ogawa H."/>
            <person name="Kato T."/>
        </authorList>
    </citation>
    <scope>NUCLEOTIDE SEQUENCE [GENOMIC DNA]</scope>
</reference>
<reference key="2">
    <citation type="journal article" date="1985" name="Proc. Natl. Acad. Sci. U.S.A.">
        <title>umuDC and mucAB operons whose products are required for UV light- and chemical-induced mutagenesis: UmuD, MucA, and LexA proteins share homology.</title>
        <authorList>
            <person name="Perry K.L."/>
            <person name="Elledge S.J."/>
            <person name="Mitchell B.B."/>
            <person name="Marsh L."/>
            <person name="Walker G.C."/>
        </authorList>
    </citation>
    <scope>NUCLEOTIDE SEQUENCE [GENOMIC DNA]</scope>
</reference>
<reference key="3">
    <citation type="journal article" date="1996" name="DNA Res.">
        <title>A 718-kb DNA sequence of the Escherichia coli K-12 genome corresponding to the 12.7-28.0 min region on the linkage map.</title>
        <authorList>
            <person name="Oshima T."/>
            <person name="Aiba H."/>
            <person name="Baba T."/>
            <person name="Fujita K."/>
            <person name="Hayashi K."/>
            <person name="Honjo A."/>
            <person name="Ikemoto K."/>
            <person name="Inada T."/>
            <person name="Itoh T."/>
            <person name="Kajihara M."/>
            <person name="Kanai K."/>
            <person name="Kashimoto K."/>
            <person name="Kimura S."/>
            <person name="Kitagawa M."/>
            <person name="Makino K."/>
            <person name="Masuda S."/>
            <person name="Miki T."/>
            <person name="Mizobuchi K."/>
            <person name="Mori H."/>
            <person name="Motomura K."/>
            <person name="Nakamura Y."/>
            <person name="Nashimoto H."/>
            <person name="Nishio Y."/>
            <person name="Saito N."/>
            <person name="Sampei G."/>
            <person name="Seki Y."/>
            <person name="Tagami H."/>
            <person name="Takemoto K."/>
            <person name="Wada C."/>
            <person name="Yamamoto Y."/>
            <person name="Yano M."/>
            <person name="Horiuchi T."/>
        </authorList>
    </citation>
    <scope>NUCLEOTIDE SEQUENCE [LARGE SCALE GENOMIC DNA]</scope>
    <source>
        <strain>K12 / W3110 / ATCC 27325 / DSM 5911</strain>
    </source>
</reference>
<reference key="4">
    <citation type="journal article" date="1997" name="Science">
        <title>The complete genome sequence of Escherichia coli K-12.</title>
        <authorList>
            <person name="Blattner F.R."/>
            <person name="Plunkett G. III"/>
            <person name="Bloch C.A."/>
            <person name="Perna N.T."/>
            <person name="Burland V."/>
            <person name="Riley M."/>
            <person name="Collado-Vides J."/>
            <person name="Glasner J.D."/>
            <person name="Rode C.K."/>
            <person name="Mayhew G.F."/>
            <person name="Gregor J."/>
            <person name="Davis N.W."/>
            <person name="Kirkpatrick H.A."/>
            <person name="Goeden M.A."/>
            <person name="Rose D.J."/>
            <person name="Mau B."/>
            <person name="Shao Y."/>
        </authorList>
    </citation>
    <scope>NUCLEOTIDE SEQUENCE [LARGE SCALE GENOMIC DNA]</scope>
    <source>
        <strain>K12 / MG1655 / ATCC 47076</strain>
    </source>
</reference>
<reference key="5">
    <citation type="journal article" date="2006" name="Mol. Syst. Biol.">
        <title>Highly accurate genome sequences of Escherichia coli K-12 strains MG1655 and W3110.</title>
        <authorList>
            <person name="Hayashi K."/>
            <person name="Morooka N."/>
            <person name="Yamamoto Y."/>
            <person name="Fujita K."/>
            <person name="Isono K."/>
            <person name="Choi S."/>
            <person name="Ohtsubo E."/>
            <person name="Baba T."/>
            <person name="Wanner B.L."/>
            <person name="Mori H."/>
            <person name="Horiuchi T."/>
        </authorList>
    </citation>
    <scope>NUCLEOTIDE SEQUENCE [LARGE SCALE GENOMIC DNA]</scope>
    <source>
        <strain>K12 / W3110 / ATCC 27325 / DSM 5911</strain>
    </source>
</reference>
<reference key="6">
    <citation type="journal article" date="1992" name="Mol. Gen. Genet.">
        <title>Escherichia coli umuDC mutants: DNA sequence alterations and UmuD cleavage.</title>
        <authorList>
            <person name="Koch W.H."/>
            <person name="Ennis D.G."/>
            <person name="Levine A.S."/>
            <person name="Woodgate R."/>
        </authorList>
    </citation>
    <scope>MUTAGENESIS</scope>
</reference>
<reference key="7">
    <citation type="journal article" date="2000" name="Mol. Microbiol.">
        <title>Identification of additional genes belonging to the LexA regulon in Escherichia coli.</title>
        <authorList>
            <person name="Fernandez De Henestrosa A.R."/>
            <person name="Ogi T."/>
            <person name="Aoyagi S."/>
            <person name="Chafin D."/>
            <person name="Hayes J.J."/>
            <person name="Ohmori H."/>
            <person name="Woodgate R."/>
        </authorList>
    </citation>
    <scope>REGULATION BY LEXA</scope>
    <scope>INDUCTION</scope>
    <source>
        <strain>K12 / RW118</strain>
    </source>
</reference>
<reference key="8">
    <citation type="journal article" date="2000" name="Nature">
        <title>Roles of E. coli DNA polymerases IV and V in lesion-targeted and untargeted SOS mutagenesis.</title>
        <authorList>
            <person name="Tang M."/>
            <person name="Pham P."/>
            <person name="Shen X."/>
            <person name="Taylor J.S."/>
            <person name="O'Donnell M."/>
            <person name="Woodgate R."/>
            <person name="Goodman M.F."/>
        </authorList>
    </citation>
    <scope>FUNCTION IN TRANSLATION REPAIR</scope>
    <scope>STIMULATION BY RECA AND BETA SLIDING-CLAMP COMPLEX</scope>
</reference>
<reference key="9">
    <citation type="journal article" date="2009" name="Mol. Cell">
        <title>Hydroxyurea induces hydroxyl radical-mediated cell death in Escherichia coli.</title>
        <authorList>
            <person name="Davies B.W."/>
            <person name="Kohanski M.A."/>
            <person name="Simmons L.A."/>
            <person name="Winkler J.A."/>
            <person name="Collins J.J."/>
            <person name="Walker G.C."/>
        </authorList>
    </citation>
    <scope>INDUCTION BY HYDROXYUREA</scope>
    <source>
        <strain>K12 / MC4100 / ATCC 35695 / DSM 6574</strain>
    </source>
</reference>
<organism>
    <name type="scientific">Escherichia coli (strain K12)</name>
    <dbReference type="NCBI Taxonomy" id="83333"/>
    <lineage>
        <taxon>Bacteria</taxon>
        <taxon>Pseudomonadati</taxon>
        <taxon>Pseudomonadota</taxon>
        <taxon>Gammaproteobacteria</taxon>
        <taxon>Enterobacterales</taxon>
        <taxon>Enterobacteriaceae</taxon>
        <taxon>Escherichia</taxon>
    </lineage>
</organism>
<evidence type="ECO:0000255" key="1">
    <source>
        <dbReference type="PROSITE-ProRule" id="PRU00216"/>
    </source>
</evidence>
<evidence type="ECO:0000269" key="2">
    <source>
    </source>
</evidence>
<evidence type="ECO:0000269" key="3">
    <source>
    </source>
</evidence>
<evidence type="ECO:0000269" key="4">
    <source>
    </source>
</evidence>
<evidence type="ECO:0000269" key="5">
    <source>
    </source>
</evidence>
<evidence type="ECO:0000305" key="6"/>